<comment type="function">
    <text evidence="1">Required for the formation of a threonylcarbamoyl group on adenosine at position 37 (t(6)A37) in tRNAs that read codons beginning with adenine. Is involved in the transfer of the threonylcarbamoyl moiety of threonylcarbamoyl-AMP (TC-AMP) to the N6 group of A37, together with TsaE and TsaB. TsaD likely plays a direct catalytic role in this reaction.</text>
</comment>
<comment type="catalytic activity">
    <reaction evidence="1">
        <text>L-threonylcarbamoyladenylate + adenosine(37) in tRNA = N(6)-L-threonylcarbamoyladenosine(37) in tRNA + AMP + H(+)</text>
        <dbReference type="Rhea" id="RHEA:37059"/>
        <dbReference type="Rhea" id="RHEA-COMP:10162"/>
        <dbReference type="Rhea" id="RHEA-COMP:10163"/>
        <dbReference type="ChEBI" id="CHEBI:15378"/>
        <dbReference type="ChEBI" id="CHEBI:73682"/>
        <dbReference type="ChEBI" id="CHEBI:74411"/>
        <dbReference type="ChEBI" id="CHEBI:74418"/>
        <dbReference type="ChEBI" id="CHEBI:456215"/>
        <dbReference type="EC" id="2.3.1.234"/>
    </reaction>
</comment>
<comment type="cofactor">
    <cofactor evidence="1">
        <name>Fe(2+)</name>
        <dbReference type="ChEBI" id="CHEBI:29033"/>
    </cofactor>
    <text evidence="1">Binds 1 Fe(2+) ion per subunit.</text>
</comment>
<comment type="subcellular location">
    <subcellularLocation>
        <location evidence="1">Cytoplasm</location>
    </subcellularLocation>
</comment>
<comment type="similarity">
    <text evidence="1">Belongs to the KAE1 / TsaD family.</text>
</comment>
<dbReference type="EC" id="2.3.1.234" evidence="1"/>
<dbReference type="EMBL" id="CP000236">
    <property type="protein sequence ID" value="ABD44618.1"/>
    <property type="molecule type" value="Genomic_DNA"/>
</dbReference>
<dbReference type="RefSeq" id="WP_011452734.1">
    <property type="nucleotide sequence ID" value="NC_007799.1"/>
</dbReference>
<dbReference type="SMR" id="Q2GGH9"/>
<dbReference type="STRING" id="205920.ECH_0644"/>
<dbReference type="KEGG" id="ech:ECH_0644"/>
<dbReference type="eggNOG" id="COG0533">
    <property type="taxonomic scope" value="Bacteria"/>
</dbReference>
<dbReference type="HOGENOM" id="CLU_023208_0_2_5"/>
<dbReference type="OrthoDB" id="9806197at2"/>
<dbReference type="Proteomes" id="UP000008320">
    <property type="component" value="Chromosome"/>
</dbReference>
<dbReference type="GO" id="GO:0005737">
    <property type="term" value="C:cytoplasm"/>
    <property type="evidence" value="ECO:0007669"/>
    <property type="project" value="UniProtKB-SubCell"/>
</dbReference>
<dbReference type="GO" id="GO:0005506">
    <property type="term" value="F:iron ion binding"/>
    <property type="evidence" value="ECO:0007669"/>
    <property type="project" value="UniProtKB-UniRule"/>
</dbReference>
<dbReference type="GO" id="GO:0061711">
    <property type="term" value="F:N(6)-L-threonylcarbamoyladenine synthase activity"/>
    <property type="evidence" value="ECO:0007669"/>
    <property type="project" value="UniProtKB-EC"/>
</dbReference>
<dbReference type="GO" id="GO:0002949">
    <property type="term" value="P:tRNA threonylcarbamoyladenosine modification"/>
    <property type="evidence" value="ECO:0007669"/>
    <property type="project" value="UniProtKB-UniRule"/>
</dbReference>
<dbReference type="CDD" id="cd24133">
    <property type="entry name" value="ASKHA_NBD_TsaD_bac"/>
    <property type="match status" value="1"/>
</dbReference>
<dbReference type="FunFam" id="3.30.420.40:FF:000012">
    <property type="entry name" value="tRNA N6-adenosine threonylcarbamoyltransferase"/>
    <property type="match status" value="1"/>
</dbReference>
<dbReference type="Gene3D" id="3.30.420.40">
    <property type="match status" value="2"/>
</dbReference>
<dbReference type="HAMAP" id="MF_01445">
    <property type="entry name" value="TsaD"/>
    <property type="match status" value="1"/>
</dbReference>
<dbReference type="InterPro" id="IPR043129">
    <property type="entry name" value="ATPase_NBD"/>
</dbReference>
<dbReference type="InterPro" id="IPR000905">
    <property type="entry name" value="Gcp-like_dom"/>
</dbReference>
<dbReference type="InterPro" id="IPR017861">
    <property type="entry name" value="KAE1/TsaD"/>
</dbReference>
<dbReference type="InterPro" id="IPR022450">
    <property type="entry name" value="TsaD"/>
</dbReference>
<dbReference type="NCBIfam" id="TIGR00329">
    <property type="entry name" value="gcp_kae1"/>
    <property type="match status" value="1"/>
</dbReference>
<dbReference type="NCBIfam" id="TIGR03723">
    <property type="entry name" value="T6A_TsaD_YgjD"/>
    <property type="match status" value="1"/>
</dbReference>
<dbReference type="PANTHER" id="PTHR11735">
    <property type="entry name" value="TRNA N6-ADENOSINE THREONYLCARBAMOYLTRANSFERASE"/>
    <property type="match status" value="1"/>
</dbReference>
<dbReference type="PANTHER" id="PTHR11735:SF6">
    <property type="entry name" value="TRNA N6-ADENOSINE THREONYLCARBAMOYLTRANSFERASE, MITOCHONDRIAL"/>
    <property type="match status" value="1"/>
</dbReference>
<dbReference type="Pfam" id="PF00814">
    <property type="entry name" value="TsaD"/>
    <property type="match status" value="1"/>
</dbReference>
<dbReference type="PRINTS" id="PR00789">
    <property type="entry name" value="OSIALOPTASE"/>
</dbReference>
<dbReference type="SUPFAM" id="SSF53067">
    <property type="entry name" value="Actin-like ATPase domain"/>
    <property type="match status" value="1"/>
</dbReference>
<keyword id="KW-0012">Acyltransferase</keyword>
<keyword id="KW-0963">Cytoplasm</keyword>
<keyword id="KW-0408">Iron</keyword>
<keyword id="KW-0479">Metal-binding</keyword>
<keyword id="KW-1185">Reference proteome</keyword>
<keyword id="KW-0808">Transferase</keyword>
<keyword id="KW-0819">tRNA processing</keyword>
<name>TSAD_EHRCR</name>
<evidence type="ECO:0000255" key="1">
    <source>
        <dbReference type="HAMAP-Rule" id="MF_01445"/>
    </source>
</evidence>
<proteinExistence type="inferred from homology"/>
<protein>
    <recommendedName>
        <fullName evidence="1">tRNA N6-adenosine threonylcarbamoyltransferase</fullName>
        <ecNumber evidence="1">2.3.1.234</ecNumber>
    </recommendedName>
    <alternativeName>
        <fullName evidence="1">N6-L-threonylcarbamoyladenine synthase</fullName>
        <shortName evidence="1">t(6)A synthase</shortName>
    </alternativeName>
    <alternativeName>
        <fullName evidence="1">t(6)A37 threonylcarbamoyladenosine biosynthesis protein TsaD</fullName>
    </alternativeName>
    <alternativeName>
        <fullName evidence="1">tRNA threonylcarbamoyladenosine biosynthesis protein TsaD</fullName>
    </alternativeName>
</protein>
<feature type="chain" id="PRO_0000303353" description="tRNA N6-adenosine threonylcarbamoyltransferase">
    <location>
        <begin position="1"/>
        <end position="349"/>
    </location>
</feature>
<feature type="binding site" evidence="1">
    <location>
        <position position="114"/>
    </location>
    <ligand>
        <name>Fe cation</name>
        <dbReference type="ChEBI" id="CHEBI:24875"/>
    </ligand>
</feature>
<feature type="binding site" evidence="1">
    <location>
        <position position="118"/>
    </location>
    <ligand>
        <name>Fe cation</name>
        <dbReference type="ChEBI" id="CHEBI:24875"/>
    </ligand>
</feature>
<feature type="binding site" evidence="1">
    <location>
        <begin position="136"/>
        <end position="140"/>
    </location>
    <ligand>
        <name>substrate</name>
    </ligand>
</feature>
<feature type="binding site" evidence="1">
    <location>
        <position position="169"/>
    </location>
    <ligand>
        <name>substrate</name>
    </ligand>
</feature>
<feature type="binding site" evidence="1">
    <location>
        <position position="182"/>
    </location>
    <ligand>
        <name>substrate</name>
    </ligand>
</feature>
<feature type="binding site" evidence="1">
    <location>
        <position position="280"/>
    </location>
    <ligand>
        <name>substrate</name>
    </ligand>
</feature>
<feature type="binding site" evidence="1">
    <location>
        <position position="308"/>
    </location>
    <ligand>
        <name>Fe cation</name>
        <dbReference type="ChEBI" id="CHEBI:24875"/>
    </ligand>
</feature>
<organism>
    <name type="scientific">Ehrlichia chaffeensis (strain ATCC CRL-10679 / Arkansas)</name>
    <dbReference type="NCBI Taxonomy" id="205920"/>
    <lineage>
        <taxon>Bacteria</taxon>
        <taxon>Pseudomonadati</taxon>
        <taxon>Pseudomonadota</taxon>
        <taxon>Alphaproteobacteria</taxon>
        <taxon>Rickettsiales</taxon>
        <taxon>Anaplasmataceae</taxon>
        <taxon>Ehrlichia</taxon>
    </lineage>
</organism>
<gene>
    <name evidence="1" type="primary">tsaD</name>
    <name type="synonym">gcp</name>
    <name type="ordered locus">ECH_0644</name>
</gene>
<accession>Q2GGH9</accession>
<sequence>MDKLKIVLGIETSCDETAVAIVNSNKEVLSHKILSQQEHAAYGGVVPEIASRAHINYLYELVGSCIEESQLCFNDIDAIAVTAGPGLIGGLIVGIMMAKAISSVTGKPIIEINHLEAHALIIRMFYEIDFPFLLLIMSGGHCQFLVAYDVRCYYKLGSSLDDSLGEVFDKVARMLNLGYPGGPIIEEKSLLGDSGSFTLPRALTNRPGCDFSFSGLKTAVRNIIAGQKCINHELVCNISASFQDCVGDILVNRINNAIVMSKDIDHRINKLVVTGGVAANKLLRNRMSVCANDNGFEILYPPSKLCTDNGVMIGWAGIENLAKGYVSNLNFFPRARWPLENLRFDILRK</sequence>
<reference key="1">
    <citation type="journal article" date="2006" name="PLoS Genet.">
        <title>Comparative genomics of emerging human ehrlichiosis agents.</title>
        <authorList>
            <person name="Dunning Hotopp J.C."/>
            <person name="Lin M."/>
            <person name="Madupu R."/>
            <person name="Crabtree J."/>
            <person name="Angiuoli S.V."/>
            <person name="Eisen J.A."/>
            <person name="Seshadri R."/>
            <person name="Ren Q."/>
            <person name="Wu M."/>
            <person name="Utterback T.R."/>
            <person name="Smith S."/>
            <person name="Lewis M."/>
            <person name="Khouri H."/>
            <person name="Zhang C."/>
            <person name="Niu H."/>
            <person name="Lin Q."/>
            <person name="Ohashi N."/>
            <person name="Zhi N."/>
            <person name="Nelson W.C."/>
            <person name="Brinkac L.M."/>
            <person name="Dodson R.J."/>
            <person name="Rosovitz M.J."/>
            <person name="Sundaram J.P."/>
            <person name="Daugherty S.C."/>
            <person name="Davidsen T."/>
            <person name="Durkin A.S."/>
            <person name="Gwinn M.L."/>
            <person name="Haft D.H."/>
            <person name="Selengut J.D."/>
            <person name="Sullivan S.A."/>
            <person name="Zafar N."/>
            <person name="Zhou L."/>
            <person name="Benahmed F."/>
            <person name="Forberger H."/>
            <person name="Halpin R."/>
            <person name="Mulligan S."/>
            <person name="Robinson J."/>
            <person name="White O."/>
            <person name="Rikihisa Y."/>
            <person name="Tettelin H."/>
        </authorList>
    </citation>
    <scope>NUCLEOTIDE SEQUENCE [LARGE SCALE GENOMIC DNA]</scope>
    <source>
        <strain>ATCC CRL-10679 / Arkansas</strain>
    </source>
</reference>